<gene>
    <name evidence="1" type="primary">pxpA</name>
    <name type="ordered locus">SEN0677</name>
</gene>
<accession>B5QWF7</accession>
<name>PXPA_SALEP</name>
<evidence type="ECO:0000255" key="1">
    <source>
        <dbReference type="HAMAP-Rule" id="MF_00691"/>
    </source>
</evidence>
<proteinExistence type="inferred from homology"/>
<dbReference type="EC" id="3.5.2.9" evidence="1"/>
<dbReference type="EMBL" id="AM933172">
    <property type="protein sequence ID" value="CAR32263.1"/>
    <property type="molecule type" value="Genomic_DNA"/>
</dbReference>
<dbReference type="RefSeq" id="WP_001017925.1">
    <property type="nucleotide sequence ID" value="NC_011294.1"/>
</dbReference>
<dbReference type="SMR" id="B5QWF7"/>
<dbReference type="KEGG" id="set:SEN0677"/>
<dbReference type="HOGENOM" id="CLU_069535_0_0_6"/>
<dbReference type="Proteomes" id="UP000000613">
    <property type="component" value="Chromosome"/>
</dbReference>
<dbReference type="GO" id="GO:0017168">
    <property type="term" value="F:5-oxoprolinase (ATP-hydrolyzing) activity"/>
    <property type="evidence" value="ECO:0007669"/>
    <property type="project" value="UniProtKB-UniRule"/>
</dbReference>
<dbReference type="GO" id="GO:0005524">
    <property type="term" value="F:ATP binding"/>
    <property type="evidence" value="ECO:0007669"/>
    <property type="project" value="UniProtKB-UniRule"/>
</dbReference>
<dbReference type="GO" id="GO:0005975">
    <property type="term" value="P:carbohydrate metabolic process"/>
    <property type="evidence" value="ECO:0007669"/>
    <property type="project" value="InterPro"/>
</dbReference>
<dbReference type="CDD" id="cd10800">
    <property type="entry name" value="LamB_YcsF_YbgL_like"/>
    <property type="match status" value="1"/>
</dbReference>
<dbReference type="Gene3D" id="3.20.20.370">
    <property type="entry name" value="Glycoside hydrolase/deacetylase"/>
    <property type="match status" value="1"/>
</dbReference>
<dbReference type="HAMAP" id="MF_00691">
    <property type="entry name" value="PxpA"/>
    <property type="match status" value="1"/>
</dbReference>
<dbReference type="InterPro" id="IPR011330">
    <property type="entry name" value="Glyco_hydro/deAcase_b/a-brl"/>
</dbReference>
<dbReference type="InterPro" id="IPR005501">
    <property type="entry name" value="LamB/YcsF/PxpA-like"/>
</dbReference>
<dbReference type="NCBIfam" id="NF003812">
    <property type="entry name" value="PRK05406.1-1"/>
    <property type="match status" value="1"/>
</dbReference>
<dbReference type="NCBIfam" id="NF003814">
    <property type="entry name" value="PRK05406.1-3"/>
    <property type="match status" value="1"/>
</dbReference>
<dbReference type="NCBIfam" id="NF003815">
    <property type="entry name" value="PRK05406.1-4"/>
    <property type="match status" value="1"/>
</dbReference>
<dbReference type="NCBIfam" id="NF003816">
    <property type="entry name" value="PRK05406.1-5"/>
    <property type="match status" value="1"/>
</dbReference>
<dbReference type="PANTHER" id="PTHR30292:SF0">
    <property type="entry name" value="5-OXOPROLINASE SUBUNIT A"/>
    <property type="match status" value="1"/>
</dbReference>
<dbReference type="PANTHER" id="PTHR30292">
    <property type="entry name" value="UNCHARACTERIZED PROTEIN YBGL-RELATED"/>
    <property type="match status" value="1"/>
</dbReference>
<dbReference type="Pfam" id="PF03746">
    <property type="entry name" value="LamB_YcsF"/>
    <property type="match status" value="1"/>
</dbReference>
<dbReference type="SUPFAM" id="SSF88713">
    <property type="entry name" value="Glycoside hydrolase/deacetylase"/>
    <property type="match status" value="1"/>
</dbReference>
<protein>
    <recommendedName>
        <fullName evidence="1">5-oxoprolinase subunit A</fullName>
        <shortName evidence="1">5-OPase subunit A</shortName>
        <ecNumber evidence="1">3.5.2.9</ecNumber>
    </recommendedName>
    <alternativeName>
        <fullName evidence="1">5-oxoprolinase (ATP-hydrolyzing) subunit A</fullName>
    </alternativeName>
</protein>
<feature type="chain" id="PRO_1000132070" description="5-oxoprolinase subunit A">
    <location>
        <begin position="1"/>
        <end position="244"/>
    </location>
</feature>
<sequence length="244" mass="26063">MNIDLNADVGEGCASDSELLTLVSSANIACGFHAGDAQTMLTSVREALKNGVAIGAHPSFPDRDNFGRTAMALPPETVYAQTLYQIGALGAIVQAQGSVMRHVKPHGMLYNQAAKDPHLAQAIAKAVHDYDPSLILVGLAGSELIRAGERHRLVTRQEVFADRGYQADGSLVPRMQPGALIHDEEQALAQTLDMVQAGRVKSVTGVWTTVTAQTVCIHGDGEYALAFARRLRAAFNARNIHVIA</sequence>
<organism>
    <name type="scientific">Salmonella enteritidis PT4 (strain P125109)</name>
    <dbReference type="NCBI Taxonomy" id="550537"/>
    <lineage>
        <taxon>Bacteria</taxon>
        <taxon>Pseudomonadati</taxon>
        <taxon>Pseudomonadota</taxon>
        <taxon>Gammaproteobacteria</taxon>
        <taxon>Enterobacterales</taxon>
        <taxon>Enterobacteriaceae</taxon>
        <taxon>Salmonella</taxon>
    </lineage>
</organism>
<keyword id="KW-0067">ATP-binding</keyword>
<keyword id="KW-0378">Hydrolase</keyword>
<keyword id="KW-0547">Nucleotide-binding</keyword>
<comment type="function">
    <text evidence="1">Catalyzes the cleavage of 5-oxoproline to form L-glutamate coupled to the hydrolysis of ATP to ADP and inorganic phosphate.</text>
</comment>
<comment type="catalytic activity">
    <reaction evidence="1">
        <text>5-oxo-L-proline + ATP + 2 H2O = L-glutamate + ADP + phosphate + H(+)</text>
        <dbReference type="Rhea" id="RHEA:10348"/>
        <dbReference type="ChEBI" id="CHEBI:15377"/>
        <dbReference type="ChEBI" id="CHEBI:15378"/>
        <dbReference type="ChEBI" id="CHEBI:29985"/>
        <dbReference type="ChEBI" id="CHEBI:30616"/>
        <dbReference type="ChEBI" id="CHEBI:43474"/>
        <dbReference type="ChEBI" id="CHEBI:58402"/>
        <dbReference type="ChEBI" id="CHEBI:456216"/>
        <dbReference type="EC" id="3.5.2.9"/>
    </reaction>
</comment>
<comment type="subunit">
    <text evidence="1">Forms a complex composed of PxpA, PxpB and PxpC.</text>
</comment>
<comment type="similarity">
    <text evidence="1">Belongs to the LamB/PxpA family.</text>
</comment>
<reference key="1">
    <citation type="journal article" date="2008" name="Genome Res.">
        <title>Comparative genome analysis of Salmonella enteritidis PT4 and Salmonella gallinarum 287/91 provides insights into evolutionary and host adaptation pathways.</title>
        <authorList>
            <person name="Thomson N.R."/>
            <person name="Clayton D.J."/>
            <person name="Windhorst D."/>
            <person name="Vernikos G."/>
            <person name="Davidson S."/>
            <person name="Churcher C."/>
            <person name="Quail M.A."/>
            <person name="Stevens M."/>
            <person name="Jones M.A."/>
            <person name="Watson M."/>
            <person name="Barron A."/>
            <person name="Layton A."/>
            <person name="Pickard D."/>
            <person name="Kingsley R.A."/>
            <person name="Bignell A."/>
            <person name="Clark L."/>
            <person name="Harris B."/>
            <person name="Ormond D."/>
            <person name="Abdellah Z."/>
            <person name="Brooks K."/>
            <person name="Cherevach I."/>
            <person name="Chillingworth T."/>
            <person name="Woodward J."/>
            <person name="Norberczak H."/>
            <person name="Lord A."/>
            <person name="Arrowsmith C."/>
            <person name="Jagels K."/>
            <person name="Moule S."/>
            <person name="Mungall K."/>
            <person name="Saunders M."/>
            <person name="Whitehead S."/>
            <person name="Chabalgoity J.A."/>
            <person name="Maskell D."/>
            <person name="Humphreys T."/>
            <person name="Roberts M."/>
            <person name="Barrow P.A."/>
            <person name="Dougan G."/>
            <person name="Parkhill J."/>
        </authorList>
    </citation>
    <scope>NUCLEOTIDE SEQUENCE [LARGE SCALE GENOMIC DNA]</scope>
    <source>
        <strain>P125109</strain>
    </source>
</reference>